<evidence type="ECO:0000255" key="1"/>
<evidence type="ECO:0000255" key="2">
    <source>
        <dbReference type="PROSITE-ProRule" id="PRU00498"/>
    </source>
</evidence>
<evidence type="ECO:0000255" key="3">
    <source>
        <dbReference type="PROSITE-ProRule" id="PRU00818"/>
    </source>
</evidence>
<evidence type="ECO:0000303" key="4">
    <source>
    </source>
</evidence>
<evidence type="ECO:0000303" key="5">
    <source>
    </source>
</evidence>
<evidence type="ECO:0000305" key="6"/>
<evidence type="ECO:0000312" key="7">
    <source>
        <dbReference type="Araport" id="AT3G01070"/>
    </source>
</evidence>
<evidence type="ECO:0000312" key="8">
    <source>
        <dbReference type="EMBL" id="AAF26167.1"/>
    </source>
</evidence>
<protein>
    <recommendedName>
        <fullName evidence="4">Early nodulin-like protein 16</fullName>
        <shortName evidence="4">AtENODL16</shortName>
    </recommendedName>
    <alternativeName>
        <fullName evidence="6">Phytocyanin-like protein ENODL16</fullName>
    </alternativeName>
</protein>
<proteinExistence type="evidence at transcript level"/>
<keyword id="KW-1003">Cell membrane</keyword>
<keyword id="KW-1015">Disulfide bond</keyword>
<keyword id="KW-0325">Glycoprotein</keyword>
<keyword id="KW-0336">GPI-anchor</keyword>
<keyword id="KW-0449">Lipoprotein</keyword>
<keyword id="KW-0472">Membrane</keyword>
<keyword id="KW-1185">Reference proteome</keyword>
<keyword id="KW-0732">Signal</keyword>
<organism>
    <name type="scientific">Arabidopsis thaliana</name>
    <name type="common">Mouse-ear cress</name>
    <dbReference type="NCBI Taxonomy" id="3702"/>
    <lineage>
        <taxon>Eukaryota</taxon>
        <taxon>Viridiplantae</taxon>
        <taxon>Streptophyta</taxon>
        <taxon>Embryophyta</taxon>
        <taxon>Tracheophyta</taxon>
        <taxon>Spermatophyta</taxon>
        <taxon>Magnoliopsida</taxon>
        <taxon>eudicotyledons</taxon>
        <taxon>Gunneridae</taxon>
        <taxon>Pentapetalae</taxon>
        <taxon>rosids</taxon>
        <taxon>malvids</taxon>
        <taxon>Brassicales</taxon>
        <taxon>Brassicaceae</taxon>
        <taxon>Camelineae</taxon>
        <taxon>Arabidopsis</taxon>
    </lineage>
</organism>
<dbReference type="EMBL" id="AC008261">
    <property type="protein sequence ID" value="AAF26167.1"/>
    <property type="molecule type" value="Genomic_DNA"/>
</dbReference>
<dbReference type="EMBL" id="CP002686">
    <property type="protein sequence ID" value="AEE73604.1"/>
    <property type="molecule type" value="Genomic_DNA"/>
</dbReference>
<dbReference type="EMBL" id="AK221055">
    <property type="protein sequence ID" value="BAD94832.1"/>
    <property type="molecule type" value="mRNA"/>
</dbReference>
<dbReference type="EMBL" id="BT043476">
    <property type="protein sequence ID" value="ACF88481.1"/>
    <property type="molecule type" value="mRNA"/>
</dbReference>
<dbReference type="EMBL" id="AY088441">
    <property type="protein sequence ID" value="AAM65977.1"/>
    <property type="molecule type" value="mRNA"/>
</dbReference>
<dbReference type="RefSeq" id="NP_186756.1">
    <property type="nucleotide sequence ID" value="NM_110972.2"/>
</dbReference>
<dbReference type="SMR" id="Q9MAC1"/>
<dbReference type="FunCoup" id="Q9MAC1">
    <property type="interactions" value="2"/>
</dbReference>
<dbReference type="STRING" id="3702.Q9MAC1"/>
<dbReference type="GlyGen" id="Q9MAC1">
    <property type="glycosylation" value="4 sites"/>
</dbReference>
<dbReference type="PaxDb" id="3702-AT3G01070.1"/>
<dbReference type="ProteomicsDB" id="181259"/>
<dbReference type="EnsemblPlants" id="AT3G01070.1">
    <property type="protein sequence ID" value="AT3G01070.1"/>
    <property type="gene ID" value="AT3G01070"/>
</dbReference>
<dbReference type="GeneID" id="821257"/>
<dbReference type="Gramene" id="AT3G01070.1">
    <property type="protein sequence ID" value="AT3G01070.1"/>
    <property type="gene ID" value="AT3G01070"/>
</dbReference>
<dbReference type="KEGG" id="ath:AT3G01070"/>
<dbReference type="Araport" id="AT3G01070"/>
<dbReference type="TAIR" id="AT3G01070">
    <property type="gene designation" value="ENODL16"/>
</dbReference>
<dbReference type="eggNOG" id="ENOG502S1MH">
    <property type="taxonomic scope" value="Eukaryota"/>
</dbReference>
<dbReference type="HOGENOM" id="CLU_058719_3_0_1"/>
<dbReference type="InParanoid" id="Q9MAC1"/>
<dbReference type="OMA" id="PTKNNAR"/>
<dbReference type="PRO" id="PR:Q9MAC1"/>
<dbReference type="Proteomes" id="UP000006548">
    <property type="component" value="Chromosome 3"/>
</dbReference>
<dbReference type="ExpressionAtlas" id="Q9MAC1">
    <property type="expression patterns" value="baseline and differential"/>
</dbReference>
<dbReference type="GO" id="GO:0005886">
    <property type="term" value="C:plasma membrane"/>
    <property type="evidence" value="ECO:0007669"/>
    <property type="project" value="UniProtKB-SubCell"/>
</dbReference>
<dbReference type="GO" id="GO:0098552">
    <property type="term" value="C:side of membrane"/>
    <property type="evidence" value="ECO:0007669"/>
    <property type="project" value="UniProtKB-KW"/>
</dbReference>
<dbReference type="GO" id="GO:0009055">
    <property type="term" value="F:electron transfer activity"/>
    <property type="evidence" value="ECO:0007669"/>
    <property type="project" value="InterPro"/>
</dbReference>
<dbReference type="FunFam" id="2.60.40.420:FF:000018">
    <property type="entry name" value="Lamin-like protein"/>
    <property type="match status" value="1"/>
</dbReference>
<dbReference type="Gene3D" id="2.60.40.420">
    <property type="entry name" value="Cupredoxins - blue copper proteins"/>
    <property type="match status" value="1"/>
</dbReference>
<dbReference type="InterPro" id="IPR008972">
    <property type="entry name" value="Cupredoxin"/>
</dbReference>
<dbReference type="InterPro" id="IPR039391">
    <property type="entry name" value="Phytocyanin-like"/>
</dbReference>
<dbReference type="InterPro" id="IPR003245">
    <property type="entry name" value="Phytocyanin_dom"/>
</dbReference>
<dbReference type="PANTHER" id="PTHR33021">
    <property type="entry name" value="BLUE COPPER PROTEIN"/>
    <property type="match status" value="1"/>
</dbReference>
<dbReference type="PANTHER" id="PTHR33021:SF534">
    <property type="entry name" value="EARLY NODULIN-LIKE PROTEIN 16"/>
    <property type="match status" value="1"/>
</dbReference>
<dbReference type="Pfam" id="PF02298">
    <property type="entry name" value="Cu_bind_like"/>
    <property type="match status" value="1"/>
</dbReference>
<dbReference type="SUPFAM" id="SSF49503">
    <property type="entry name" value="Cupredoxins"/>
    <property type="match status" value="1"/>
</dbReference>
<dbReference type="PROSITE" id="PS51485">
    <property type="entry name" value="PHYTOCYANIN"/>
    <property type="match status" value="1"/>
</dbReference>
<name>ENL16_ARATH</name>
<gene>
    <name evidence="4" type="primary">ENODL16</name>
    <name evidence="4" type="synonym">EN16</name>
    <name evidence="7" type="ordered locus">At3g01070</name>
    <name evidence="8" type="ORF">T4P13.25</name>
</gene>
<sequence length="167" mass="18636">MARVAVLVAGAVLAFLLAATNVTAKRWTVGDNKFWNPNINYTIWAQDKHFYLDDWLYFVYERNQYNVIEVNETNYISCNPNNPIANWSRGAGRDLVHLNVTRHYYLISGNGGGCYGGMKLAVLVEKPPPPPAAAPNKNSARRTFSVSGFAYQFLIPVAVFAAVGTRY</sequence>
<reference key="1">
    <citation type="journal article" date="2000" name="Nature">
        <title>Sequence and analysis of chromosome 3 of the plant Arabidopsis thaliana.</title>
        <authorList>
            <person name="Salanoubat M."/>
            <person name="Lemcke K."/>
            <person name="Rieger M."/>
            <person name="Ansorge W."/>
            <person name="Unseld M."/>
            <person name="Fartmann B."/>
            <person name="Valle G."/>
            <person name="Bloecker H."/>
            <person name="Perez-Alonso M."/>
            <person name="Obermaier B."/>
            <person name="Delseny M."/>
            <person name="Boutry M."/>
            <person name="Grivell L.A."/>
            <person name="Mache R."/>
            <person name="Puigdomenech P."/>
            <person name="De Simone V."/>
            <person name="Choisne N."/>
            <person name="Artiguenave F."/>
            <person name="Robert C."/>
            <person name="Brottier P."/>
            <person name="Wincker P."/>
            <person name="Cattolico L."/>
            <person name="Weissenbach J."/>
            <person name="Saurin W."/>
            <person name="Quetier F."/>
            <person name="Schaefer M."/>
            <person name="Mueller-Auer S."/>
            <person name="Gabel C."/>
            <person name="Fuchs M."/>
            <person name="Benes V."/>
            <person name="Wurmbach E."/>
            <person name="Drzonek H."/>
            <person name="Erfle H."/>
            <person name="Jordan N."/>
            <person name="Bangert S."/>
            <person name="Wiedelmann R."/>
            <person name="Kranz H."/>
            <person name="Voss H."/>
            <person name="Holland R."/>
            <person name="Brandt P."/>
            <person name="Nyakatura G."/>
            <person name="Vezzi A."/>
            <person name="D'Angelo M."/>
            <person name="Pallavicini A."/>
            <person name="Toppo S."/>
            <person name="Simionati B."/>
            <person name="Conrad A."/>
            <person name="Hornischer K."/>
            <person name="Kauer G."/>
            <person name="Loehnert T.-H."/>
            <person name="Nordsiek G."/>
            <person name="Reichelt J."/>
            <person name="Scharfe M."/>
            <person name="Schoen O."/>
            <person name="Bargues M."/>
            <person name="Terol J."/>
            <person name="Climent J."/>
            <person name="Navarro P."/>
            <person name="Collado C."/>
            <person name="Perez-Perez A."/>
            <person name="Ottenwaelder B."/>
            <person name="Duchemin D."/>
            <person name="Cooke R."/>
            <person name="Laudie M."/>
            <person name="Berger-Llauro C."/>
            <person name="Purnelle B."/>
            <person name="Masuy D."/>
            <person name="de Haan M."/>
            <person name="Maarse A.C."/>
            <person name="Alcaraz J.-P."/>
            <person name="Cottet A."/>
            <person name="Casacuberta E."/>
            <person name="Monfort A."/>
            <person name="Argiriou A."/>
            <person name="Flores M."/>
            <person name="Liguori R."/>
            <person name="Vitale D."/>
            <person name="Mannhaupt G."/>
            <person name="Haase D."/>
            <person name="Schoof H."/>
            <person name="Rudd S."/>
            <person name="Zaccaria P."/>
            <person name="Mewes H.-W."/>
            <person name="Mayer K.F.X."/>
            <person name="Kaul S."/>
            <person name="Town C.D."/>
            <person name="Koo H.L."/>
            <person name="Tallon L.J."/>
            <person name="Jenkins J."/>
            <person name="Rooney T."/>
            <person name="Rizzo M."/>
            <person name="Walts A."/>
            <person name="Utterback T."/>
            <person name="Fujii C.Y."/>
            <person name="Shea T.P."/>
            <person name="Creasy T.H."/>
            <person name="Haas B."/>
            <person name="Maiti R."/>
            <person name="Wu D."/>
            <person name="Peterson J."/>
            <person name="Van Aken S."/>
            <person name="Pai G."/>
            <person name="Militscher J."/>
            <person name="Sellers P."/>
            <person name="Gill J.E."/>
            <person name="Feldblyum T.V."/>
            <person name="Preuss D."/>
            <person name="Lin X."/>
            <person name="Nierman W.C."/>
            <person name="Salzberg S.L."/>
            <person name="White O."/>
            <person name="Venter J.C."/>
            <person name="Fraser C.M."/>
            <person name="Kaneko T."/>
            <person name="Nakamura Y."/>
            <person name="Sato S."/>
            <person name="Kato T."/>
            <person name="Asamizu E."/>
            <person name="Sasamoto S."/>
            <person name="Kimura T."/>
            <person name="Idesawa K."/>
            <person name="Kawashima K."/>
            <person name="Kishida Y."/>
            <person name="Kiyokawa C."/>
            <person name="Kohara M."/>
            <person name="Matsumoto M."/>
            <person name="Matsuno A."/>
            <person name="Muraki A."/>
            <person name="Nakayama S."/>
            <person name="Nakazaki N."/>
            <person name="Shinpo S."/>
            <person name="Takeuchi C."/>
            <person name="Wada T."/>
            <person name="Watanabe A."/>
            <person name="Yamada M."/>
            <person name="Yasuda M."/>
            <person name="Tabata S."/>
        </authorList>
    </citation>
    <scope>NUCLEOTIDE SEQUENCE [LARGE SCALE GENOMIC DNA]</scope>
    <source>
        <strain>cv. Columbia</strain>
    </source>
</reference>
<reference key="2">
    <citation type="journal article" date="2017" name="Plant J.">
        <title>Araport11: a complete reannotation of the Arabidopsis thaliana reference genome.</title>
        <authorList>
            <person name="Cheng C.Y."/>
            <person name="Krishnakumar V."/>
            <person name="Chan A.P."/>
            <person name="Thibaud-Nissen F."/>
            <person name="Schobel S."/>
            <person name="Town C.D."/>
        </authorList>
    </citation>
    <scope>GENOME REANNOTATION</scope>
    <source>
        <strain>cv. Columbia</strain>
    </source>
</reference>
<reference key="3">
    <citation type="submission" date="2005-03" db="EMBL/GenBank/DDBJ databases">
        <title>Large-scale analysis of RIKEN Arabidopsis full-length (RAFL) cDNAs.</title>
        <authorList>
            <person name="Totoki Y."/>
            <person name="Seki M."/>
            <person name="Ishida J."/>
            <person name="Nakajima M."/>
            <person name="Enju A."/>
            <person name="Kamiya A."/>
            <person name="Narusaka M."/>
            <person name="Shin-i T."/>
            <person name="Nakagawa M."/>
            <person name="Sakamoto N."/>
            <person name="Oishi K."/>
            <person name="Kohara Y."/>
            <person name="Kobayashi M."/>
            <person name="Toyoda A."/>
            <person name="Sakaki Y."/>
            <person name="Sakurai T."/>
            <person name="Iida K."/>
            <person name="Akiyama K."/>
            <person name="Satou M."/>
            <person name="Toyoda T."/>
            <person name="Konagaya A."/>
            <person name="Carninci P."/>
            <person name="Kawai J."/>
            <person name="Hayashizaki Y."/>
            <person name="Shinozaki K."/>
        </authorList>
    </citation>
    <scope>NUCLEOTIDE SEQUENCE [LARGE SCALE MRNA]</scope>
    <source>
        <strain>cv. Columbia</strain>
    </source>
</reference>
<reference key="4">
    <citation type="submission" date="2008-07" db="EMBL/GenBank/DDBJ databases">
        <title>Arabidopsis ORF clones.</title>
        <authorList>
            <person name="de los Reyes C."/>
            <person name="Quan R."/>
            <person name="Chen H."/>
            <person name="Bautista V."/>
            <person name="Kim C.J."/>
            <person name="Ecker J.R."/>
        </authorList>
    </citation>
    <scope>NUCLEOTIDE SEQUENCE [LARGE SCALE MRNA]</scope>
    <source>
        <strain>cv. Columbia</strain>
    </source>
</reference>
<reference key="5">
    <citation type="submission" date="2002-03" db="EMBL/GenBank/DDBJ databases">
        <title>Full-length cDNA from Arabidopsis thaliana.</title>
        <authorList>
            <person name="Brover V.V."/>
            <person name="Troukhan M.E."/>
            <person name="Alexandrov N.A."/>
            <person name="Lu Y.-P."/>
            <person name="Flavell R.B."/>
            <person name="Feldmann K.A."/>
        </authorList>
    </citation>
    <scope>NUCLEOTIDE SEQUENCE [LARGE SCALE MRNA]</scope>
</reference>
<reference key="6">
    <citation type="journal article" date="2003" name="Plant Physiol.">
        <title>Identification of glycosylphosphatidylinositol-anchored proteins in Arabidopsis. A proteomic and genomic analysis.</title>
        <authorList>
            <person name="Borner G.H.H."/>
            <person name="Lilley K.S."/>
            <person name="Stevens T.J."/>
            <person name="Dupree P."/>
        </authorList>
    </citation>
    <scope>GENE FAMILY</scope>
    <source>
        <strain>cv. Columbia</strain>
    </source>
</reference>
<reference key="7">
    <citation type="journal article" date="2009" name="Biosci. Biotechnol. Biochem.">
        <title>Genome-wide identification, structure and expression studies, and mutant collection of 22 early nodulin-like protein genes in Arabidopsis.</title>
        <authorList>
            <person name="Mashiguchi K."/>
            <person name="Asami T."/>
            <person name="Suzuki Y."/>
        </authorList>
    </citation>
    <scope>GENE FAMILY</scope>
    <scope>NOMENCLATURE</scope>
    <source>
        <strain>cv. Columbia</strain>
    </source>
</reference>
<reference key="8">
    <citation type="journal article" date="2014" name="Plant Cell Physiol.">
        <title>Emerging functions of nodulin-like proteins in non-nodulating plant species.</title>
        <authorList>
            <person name="Denance N."/>
            <person name="Szurek B."/>
            <person name="Noel L.D."/>
        </authorList>
    </citation>
    <scope>REVIEW ON NODULIN-LIKE PROTEINS</scope>
</reference>
<feature type="signal peptide" evidence="1">
    <location>
        <begin position="1"/>
        <end position="24"/>
    </location>
</feature>
<feature type="chain" id="PRO_5015099910" description="Early nodulin-like protein 16">
    <location>
        <begin position="25"/>
        <end position="138"/>
    </location>
</feature>
<feature type="propeptide" id="PRO_0000457746" description="Removed in mature form" evidence="1">
    <location>
        <begin position="139"/>
        <end position="167"/>
    </location>
</feature>
<feature type="domain" description="Phytocyanin" evidence="3">
    <location>
        <begin position="25"/>
        <end position="126"/>
    </location>
</feature>
<feature type="lipid moiety-binding region" description="GPI-anchor amidated asparagine" evidence="1">
    <location>
        <position position="138"/>
    </location>
</feature>
<feature type="glycosylation site" description="N-linked (GlcNAc...) asparagine" evidence="2">
    <location>
        <position position="40"/>
    </location>
</feature>
<feature type="glycosylation site" description="N-linked (GlcNAc...) asparagine" evidence="2">
    <location>
        <position position="71"/>
    </location>
</feature>
<feature type="glycosylation site" description="N-linked (GlcNAc...) asparagine" evidence="2">
    <location>
        <position position="86"/>
    </location>
</feature>
<feature type="glycosylation site" description="N-linked (GlcNAc...) asparagine" evidence="2">
    <location>
        <position position="99"/>
    </location>
</feature>
<feature type="disulfide bond" evidence="3">
    <location>
        <begin position="78"/>
        <end position="114"/>
    </location>
</feature>
<feature type="sequence conflict" description="In Ref. 5; AAM65977." evidence="6" ref="5">
    <original>G</original>
    <variation>A</variation>
    <location>
        <position position="10"/>
    </location>
</feature>
<feature type="sequence conflict" description="In Ref. 5; AAM65977." evidence="6" ref="5">
    <original>W</original>
    <variation>R</variation>
    <location>
        <position position="27"/>
    </location>
</feature>
<accession>Q9MAC1</accession>
<accession>Q8L9G8</accession>
<comment type="function">
    <text evidence="5">May act as a carbohydrate transporter.</text>
</comment>
<comment type="subcellular location">
    <subcellularLocation>
        <location evidence="1">Cell membrane</location>
        <topology evidence="1">Lipid-anchor</topology>
        <topology evidence="1">GPI-anchor</topology>
    </subcellularLocation>
</comment>
<comment type="similarity">
    <text evidence="6">Belongs to the early nodulin-like (ENODL) family.</text>
</comment>